<evidence type="ECO:0000250" key="1"/>
<evidence type="ECO:0000250" key="2">
    <source>
        <dbReference type="UniProtKB" id="Q8IXQ5"/>
    </source>
</evidence>
<evidence type="ECO:0000255" key="3">
    <source>
        <dbReference type="PROSITE-ProRule" id="PRU00037"/>
    </source>
</evidence>
<sequence>MAAPGSEKSSKKKTEKKLAAREEAKLLAGFMGVMNSMRKQRTLCDVILMVQERRIPAHRVVLASASHFFNLMFTTNMLESKSFEVELKDAEPDIIEQLVEFAYTARISVNSNNVQSLLDAANQYQIEPVKKMCVDFLKEQVDASNCLGISVLAECLDCPELKATADDFIHQHFTEVYKTDEFLQLDVKRVTHLLNQDTLTVRAEDQVYDAAVRWLKYDEPNRQPYMVDILAKVRFPLISKNFLSKTVQAEPLIQDNPECLKMVISGMRYHLLSPEDREELVEGTRPRRKKHDYRIALFGGSQPQSCRYFNPKDYSWTDIRCPFEKRRDAACVFWDNVVYILGGSQLFPIKRMDCYNVVKDSWYSKLGPPTPRDSLAACAAEGKIYTSGGSEVGNSALYLFECYDTRTESWHTKPSMLTQRCSHGMVEANGLIYVCGGSLGNNVSRRVLNSCEVYDPATETWTELCPMIEARKNHGLVFVKDKIFAVGGQNGLGGLDNVEYYDIKMNEWKMVSPMPWKGVTVKCAAVGSIVYVLAGFQGVGRLGHILEYNTETDKWIANSKVRAFPVTSCLICVVDTCGANEETLET</sequence>
<protein>
    <recommendedName>
        <fullName>Kelch-like protein 7</fullName>
    </recommendedName>
</protein>
<keyword id="KW-0963">Cytoplasm</keyword>
<keyword id="KW-0880">Kelch repeat</keyword>
<keyword id="KW-0539">Nucleus</keyword>
<keyword id="KW-1185">Reference proteome</keyword>
<keyword id="KW-0677">Repeat</keyword>
<keyword id="KW-0833">Ubl conjugation pathway</keyword>
<proteinExistence type="evidence at transcript level"/>
<accession>Q5ZI33</accession>
<feature type="chain" id="PRO_0000228991" description="Kelch-like protein 7">
    <location>
        <begin position="1"/>
        <end position="586"/>
    </location>
</feature>
<feature type="domain" description="BTB" evidence="3">
    <location>
        <begin position="44"/>
        <end position="111"/>
    </location>
</feature>
<feature type="domain" description="BACK">
    <location>
        <begin position="146"/>
        <end position="248"/>
    </location>
</feature>
<feature type="repeat" description="Kelch 1">
    <location>
        <begin position="294"/>
        <end position="336"/>
    </location>
</feature>
<feature type="repeat" description="Kelch 2">
    <location>
        <begin position="337"/>
        <end position="382"/>
    </location>
</feature>
<feature type="repeat" description="Kelch 3">
    <location>
        <begin position="383"/>
        <end position="430"/>
    </location>
</feature>
<feature type="repeat" description="Kelch 4">
    <location>
        <begin position="431"/>
        <end position="481"/>
    </location>
</feature>
<feature type="repeat" description="Kelch 5">
    <location>
        <begin position="483"/>
        <end position="528"/>
    </location>
</feature>
<feature type="repeat" description="Kelch 6">
    <location>
        <begin position="530"/>
        <end position="575"/>
    </location>
</feature>
<name>KLHL7_CHICK</name>
<dbReference type="EMBL" id="AJ720951">
    <property type="protein sequence ID" value="CAG32610.1"/>
    <property type="molecule type" value="mRNA"/>
</dbReference>
<dbReference type="RefSeq" id="NP_001012875.1">
    <property type="nucleotide sequence ID" value="NM_001012857.1"/>
</dbReference>
<dbReference type="SMR" id="Q5ZI33"/>
<dbReference type="FunCoup" id="Q5ZI33">
    <property type="interactions" value="747"/>
</dbReference>
<dbReference type="STRING" id="9031.ENSGALP00000017779"/>
<dbReference type="PaxDb" id="9031-ENSGALP00000017779"/>
<dbReference type="GeneID" id="420612"/>
<dbReference type="KEGG" id="gga:420612"/>
<dbReference type="CTD" id="55975"/>
<dbReference type="VEuPathDB" id="HostDB:geneid_420612"/>
<dbReference type="eggNOG" id="KOG4441">
    <property type="taxonomic scope" value="Eukaryota"/>
</dbReference>
<dbReference type="InParanoid" id="Q5ZI33"/>
<dbReference type="OrthoDB" id="19132at2759"/>
<dbReference type="PhylomeDB" id="Q5ZI33"/>
<dbReference type="UniPathway" id="UPA00143"/>
<dbReference type="PRO" id="PR:Q5ZI33"/>
<dbReference type="Proteomes" id="UP000000539">
    <property type="component" value="Unassembled WGS sequence"/>
</dbReference>
<dbReference type="GO" id="GO:0031463">
    <property type="term" value="C:Cul3-RING ubiquitin ligase complex"/>
    <property type="evidence" value="ECO:0000250"/>
    <property type="project" value="UniProtKB"/>
</dbReference>
<dbReference type="GO" id="GO:0005737">
    <property type="term" value="C:cytoplasm"/>
    <property type="evidence" value="ECO:0000318"/>
    <property type="project" value="GO_Central"/>
</dbReference>
<dbReference type="GO" id="GO:0005634">
    <property type="term" value="C:nucleus"/>
    <property type="evidence" value="ECO:0007669"/>
    <property type="project" value="UniProtKB-SubCell"/>
</dbReference>
<dbReference type="GO" id="GO:0048471">
    <property type="term" value="C:perinuclear region of cytoplasm"/>
    <property type="evidence" value="ECO:0000250"/>
    <property type="project" value="UniProtKB"/>
</dbReference>
<dbReference type="GO" id="GO:0042803">
    <property type="term" value="F:protein homodimerization activity"/>
    <property type="evidence" value="ECO:0000250"/>
    <property type="project" value="UniProtKB"/>
</dbReference>
<dbReference type="GO" id="GO:1990756">
    <property type="term" value="F:ubiquitin-like ligase-substrate adaptor activity"/>
    <property type="evidence" value="ECO:0000318"/>
    <property type="project" value="GO_Central"/>
</dbReference>
<dbReference type="GO" id="GO:0043161">
    <property type="term" value="P:proteasome-mediated ubiquitin-dependent protein catabolic process"/>
    <property type="evidence" value="ECO:0000318"/>
    <property type="project" value="GO_Central"/>
</dbReference>
<dbReference type="GO" id="GO:0016567">
    <property type="term" value="P:protein ubiquitination"/>
    <property type="evidence" value="ECO:0000250"/>
    <property type="project" value="UniProtKB"/>
</dbReference>
<dbReference type="CDD" id="cd18447">
    <property type="entry name" value="BACK_KLHL7"/>
    <property type="match status" value="1"/>
</dbReference>
<dbReference type="CDD" id="cd18237">
    <property type="entry name" value="BTB_POZ_KLHL7"/>
    <property type="match status" value="1"/>
</dbReference>
<dbReference type="FunFam" id="1.25.40.420:FF:000007">
    <property type="entry name" value="Kelch-like family member 7"/>
    <property type="match status" value="1"/>
</dbReference>
<dbReference type="FunFam" id="2.120.10.80:FF:000013">
    <property type="entry name" value="Kelch-like family member 7"/>
    <property type="match status" value="1"/>
</dbReference>
<dbReference type="FunFam" id="3.30.710.10:FF:000080">
    <property type="entry name" value="kelch-like protein 7 isoform X1"/>
    <property type="match status" value="1"/>
</dbReference>
<dbReference type="Gene3D" id="1.25.40.420">
    <property type="match status" value="1"/>
</dbReference>
<dbReference type="Gene3D" id="2.120.10.80">
    <property type="entry name" value="Kelch-type beta propeller"/>
    <property type="match status" value="1"/>
</dbReference>
<dbReference type="Gene3D" id="3.30.710.10">
    <property type="entry name" value="Potassium Channel Kv1.1, Chain A"/>
    <property type="match status" value="1"/>
</dbReference>
<dbReference type="InterPro" id="IPR011705">
    <property type="entry name" value="BACK"/>
</dbReference>
<dbReference type="InterPro" id="IPR017096">
    <property type="entry name" value="BTB-kelch_protein"/>
</dbReference>
<dbReference type="InterPro" id="IPR000210">
    <property type="entry name" value="BTB/POZ_dom"/>
</dbReference>
<dbReference type="InterPro" id="IPR030599">
    <property type="entry name" value="BTB/POZ_KLHL7"/>
</dbReference>
<dbReference type="InterPro" id="IPR015915">
    <property type="entry name" value="Kelch-typ_b-propeller"/>
</dbReference>
<dbReference type="InterPro" id="IPR006652">
    <property type="entry name" value="Kelch_1"/>
</dbReference>
<dbReference type="InterPro" id="IPR047060">
    <property type="entry name" value="KLHL7_BACK"/>
</dbReference>
<dbReference type="InterPro" id="IPR011333">
    <property type="entry name" value="SKP1/BTB/POZ_sf"/>
</dbReference>
<dbReference type="PANTHER" id="PTHR24412">
    <property type="entry name" value="KELCH PROTEIN"/>
    <property type="match status" value="1"/>
</dbReference>
<dbReference type="PANTHER" id="PTHR24412:SF435">
    <property type="entry name" value="KELCH-LIKE PROTEIN 7"/>
    <property type="match status" value="1"/>
</dbReference>
<dbReference type="Pfam" id="PF07707">
    <property type="entry name" value="BACK"/>
    <property type="match status" value="1"/>
</dbReference>
<dbReference type="Pfam" id="PF00651">
    <property type="entry name" value="BTB"/>
    <property type="match status" value="1"/>
</dbReference>
<dbReference type="Pfam" id="PF24681">
    <property type="entry name" value="Kelch_KLHDC2_KLHL20_DRC7"/>
    <property type="match status" value="1"/>
</dbReference>
<dbReference type="PIRSF" id="PIRSF037037">
    <property type="entry name" value="Kelch-like_protein_gigaxonin"/>
    <property type="match status" value="1"/>
</dbReference>
<dbReference type="SMART" id="SM00875">
    <property type="entry name" value="BACK"/>
    <property type="match status" value="1"/>
</dbReference>
<dbReference type="SMART" id="SM00225">
    <property type="entry name" value="BTB"/>
    <property type="match status" value="1"/>
</dbReference>
<dbReference type="SMART" id="SM00612">
    <property type="entry name" value="Kelch"/>
    <property type="match status" value="4"/>
</dbReference>
<dbReference type="SUPFAM" id="SSF117281">
    <property type="entry name" value="Kelch motif"/>
    <property type="match status" value="1"/>
</dbReference>
<dbReference type="SUPFAM" id="SSF54695">
    <property type="entry name" value="POZ domain"/>
    <property type="match status" value="1"/>
</dbReference>
<dbReference type="PROSITE" id="PS50097">
    <property type="entry name" value="BTB"/>
    <property type="match status" value="1"/>
</dbReference>
<comment type="function">
    <text evidence="1">Substrate-specific adapter of a BCR (BTB-CUL3-RBX1) E3 ubiquitin ligase complex. The BCR(KLHL7) complex acts by mediating ubiquitination and subsequent degradation of substrate proteins. Probably mediates 'Lys-48'-linked ubiquitination (By similarity).</text>
</comment>
<comment type="pathway">
    <text>Protein modification; protein ubiquitination.</text>
</comment>
<comment type="subunit">
    <text evidence="1">Homodimer. Component of the BCR(KLHL7) E3 ubiquitin ligase complex (By similarity).</text>
</comment>
<comment type="subcellular location">
    <subcellularLocation>
        <location evidence="2">Nucleus</location>
    </subcellularLocation>
    <subcellularLocation>
        <location evidence="2">Cytoplasm</location>
    </subcellularLocation>
</comment>
<reference key="1">
    <citation type="journal article" date="2005" name="Genome Biol.">
        <title>Full-length cDNAs from chicken bursal lymphocytes to facilitate gene function analysis.</title>
        <authorList>
            <person name="Caldwell R.B."/>
            <person name="Kierzek A.M."/>
            <person name="Arakawa H."/>
            <person name="Bezzubov Y."/>
            <person name="Zaim J."/>
            <person name="Fiedler P."/>
            <person name="Kutter S."/>
            <person name="Blagodatski A."/>
            <person name="Kostovska D."/>
            <person name="Koter M."/>
            <person name="Plachy J."/>
            <person name="Carninci P."/>
            <person name="Hayashizaki Y."/>
            <person name="Buerstedde J.-M."/>
        </authorList>
    </citation>
    <scope>NUCLEOTIDE SEQUENCE [LARGE SCALE MRNA]</scope>
    <source>
        <strain>CB</strain>
        <tissue>Bursa of Fabricius</tissue>
    </source>
</reference>
<gene>
    <name type="primary">KLHL7</name>
    <name type="ORF">RCJMB04_30p4</name>
</gene>
<organism>
    <name type="scientific">Gallus gallus</name>
    <name type="common">Chicken</name>
    <dbReference type="NCBI Taxonomy" id="9031"/>
    <lineage>
        <taxon>Eukaryota</taxon>
        <taxon>Metazoa</taxon>
        <taxon>Chordata</taxon>
        <taxon>Craniata</taxon>
        <taxon>Vertebrata</taxon>
        <taxon>Euteleostomi</taxon>
        <taxon>Archelosauria</taxon>
        <taxon>Archosauria</taxon>
        <taxon>Dinosauria</taxon>
        <taxon>Saurischia</taxon>
        <taxon>Theropoda</taxon>
        <taxon>Coelurosauria</taxon>
        <taxon>Aves</taxon>
        <taxon>Neognathae</taxon>
        <taxon>Galloanserae</taxon>
        <taxon>Galliformes</taxon>
        <taxon>Phasianidae</taxon>
        <taxon>Phasianinae</taxon>
        <taxon>Gallus</taxon>
    </lineage>
</organism>